<proteinExistence type="inferred from homology"/>
<dbReference type="EMBL" id="CP000020">
    <property type="protein sequence ID" value="AAW84755.1"/>
    <property type="molecule type" value="Genomic_DNA"/>
</dbReference>
<dbReference type="RefSeq" id="WP_005303517.1">
    <property type="nucleotide sequence ID" value="NZ_CAWLES010000001.1"/>
</dbReference>
<dbReference type="RefSeq" id="YP_203643.1">
    <property type="nucleotide sequence ID" value="NC_006840.2"/>
</dbReference>
<dbReference type="SMR" id="Q5E891"/>
<dbReference type="STRING" id="312309.VF_0260"/>
<dbReference type="EnsemblBacteria" id="AAW84755">
    <property type="protein sequence ID" value="AAW84755"/>
    <property type="gene ID" value="VF_0260"/>
</dbReference>
<dbReference type="GeneID" id="93398995"/>
<dbReference type="KEGG" id="vfi:VF_0260"/>
<dbReference type="PATRIC" id="fig|312309.11.peg.255"/>
<dbReference type="eggNOG" id="COG0100">
    <property type="taxonomic scope" value="Bacteria"/>
</dbReference>
<dbReference type="HOGENOM" id="CLU_072439_5_0_6"/>
<dbReference type="OrthoDB" id="9806415at2"/>
<dbReference type="PRO" id="PR:Q5E891"/>
<dbReference type="Proteomes" id="UP000000537">
    <property type="component" value="Chromosome I"/>
</dbReference>
<dbReference type="GO" id="GO:1990904">
    <property type="term" value="C:ribonucleoprotein complex"/>
    <property type="evidence" value="ECO:0007669"/>
    <property type="project" value="UniProtKB-KW"/>
</dbReference>
<dbReference type="GO" id="GO:0005840">
    <property type="term" value="C:ribosome"/>
    <property type="evidence" value="ECO:0007669"/>
    <property type="project" value="UniProtKB-KW"/>
</dbReference>
<dbReference type="GO" id="GO:0019843">
    <property type="term" value="F:rRNA binding"/>
    <property type="evidence" value="ECO:0007669"/>
    <property type="project" value="UniProtKB-UniRule"/>
</dbReference>
<dbReference type="GO" id="GO:0003735">
    <property type="term" value="F:structural constituent of ribosome"/>
    <property type="evidence" value="ECO:0007669"/>
    <property type="project" value="InterPro"/>
</dbReference>
<dbReference type="GO" id="GO:0006412">
    <property type="term" value="P:translation"/>
    <property type="evidence" value="ECO:0007669"/>
    <property type="project" value="UniProtKB-UniRule"/>
</dbReference>
<dbReference type="FunFam" id="3.30.420.80:FF:000001">
    <property type="entry name" value="30S ribosomal protein S11"/>
    <property type="match status" value="1"/>
</dbReference>
<dbReference type="Gene3D" id="3.30.420.80">
    <property type="entry name" value="Ribosomal protein S11"/>
    <property type="match status" value="1"/>
</dbReference>
<dbReference type="HAMAP" id="MF_01310">
    <property type="entry name" value="Ribosomal_uS11"/>
    <property type="match status" value="1"/>
</dbReference>
<dbReference type="InterPro" id="IPR001971">
    <property type="entry name" value="Ribosomal_uS11"/>
</dbReference>
<dbReference type="InterPro" id="IPR019981">
    <property type="entry name" value="Ribosomal_uS11_bac-type"/>
</dbReference>
<dbReference type="InterPro" id="IPR018102">
    <property type="entry name" value="Ribosomal_uS11_CS"/>
</dbReference>
<dbReference type="InterPro" id="IPR036967">
    <property type="entry name" value="Ribosomal_uS11_sf"/>
</dbReference>
<dbReference type="NCBIfam" id="NF003698">
    <property type="entry name" value="PRK05309.1"/>
    <property type="match status" value="1"/>
</dbReference>
<dbReference type="NCBIfam" id="TIGR03632">
    <property type="entry name" value="uS11_bact"/>
    <property type="match status" value="1"/>
</dbReference>
<dbReference type="PANTHER" id="PTHR11759">
    <property type="entry name" value="40S RIBOSOMAL PROTEIN S14/30S RIBOSOMAL PROTEIN S11"/>
    <property type="match status" value="1"/>
</dbReference>
<dbReference type="Pfam" id="PF00411">
    <property type="entry name" value="Ribosomal_S11"/>
    <property type="match status" value="1"/>
</dbReference>
<dbReference type="PIRSF" id="PIRSF002131">
    <property type="entry name" value="Ribosomal_S11"/>
    <property type="match status" value="1"/>
</dbReference>
<dbReference type="SUPFAM" id="SSF53137">
    <property type="entry name" value="Translational machinery components"/>
    <property type="match status" value="1"/>
</dbReference>
<dbReference type="PROSITE" id="PS00054">
    <property type="entry name" value="RIBOSOMAL_S11"/>
    <property type="match status" value="1"/>
</dbReference>
<name>RS11_ALIF1</name>
<gene>
    <name evidence="1" type="primary">rpsK</name>
    <name type="ordered locus">VF_0260</name>
</gene>
<comment type="function">
    <text evidence="1">Located on the platform of the 30S subunit, it bridges several disparate RNA helices of the 16S rRNA. Forms part of the Shine-Dalgarno cleft in the 70S ribosome.</text>
</comment>
<comment type="subunit">
    <text evidence="1">Part of the 30S ribosomal subunit. Interacts with proteins S7 and S18. Binds to IF-3.</text>
</comment>
<comment type="similarity">
    <text evidence="1">Belongs to the universal ribosomal protein uS11 family.</text>
</comment>
<keyword id="KW-1185">Reference proteome</keyword>
<keyword id="KW-0687">Ribonucleoprotein</keyword>
<keyword id="KW-0689">Ribosomal protein</keyword>
<keyword id="KW-0694">RNA-binding</keyword>
<keyword id="KW-0699">rRNA-binding</keyword>
<reference key="1">
    <citation type="journal article" date="2005" name="Proc. Natl. Acad. Sci. U.S.A.">
        <title>Complete genome sequence of Vibrio fischeri: a symbiotic bacterium with pathogenic congeners.</title>
        <authorList>
            <person name="Ruby E.G."/>
            <person name="Urbanowski M."/>
            <person name="Campbell J."/>
            <person name="Dunn A."/>
            <person name="Faini M."/>
            <person name="Gunsalus R."/>
            <person name="Lostroh P."/>
            <person name="Lupp C."/>
            <person name="McCann J."/>
            <person name="Millikan D."/>
            <person name="Schaefer A."/>
            <person name="Stabb E."/>
            <person name="Stevens A."/>
            <person name="Visick K."/>
            <person name="Whistler C."/>
            <person name="Greenberg E.P."/>
        </authorList>
    </citation>
    <scope>NUCLEOTIDE SEQUENCE [LARGE SCALE GENOMIC DNA]</scope>
    <source>
        <strain>ATCC 700601 / ES114</strain>
    </source>
</reference>
<evidence type="ECO:0000255" key="1">
    <source>
        <dbReference type="HAMAP-Rule" id="MF_01310"/>
    </source>
</evidence>
<evidence type="ECO:0000305" key="2"/>
<accession>Q5E891</accession>
<sequence length="129" mass="13892">MAKQPTRARKRVRKQVADGVAHIHASFNNTIVTITDRQGNALAWATAGGSGFRGSRKSTPFAAQVAAERCGEMAKEYGVKNLEVMVKGPGPGRESTIRALNAAGYRITNIVDATPIPHNGCRPPKKRRV</sequence>
<feature type="chain" id="PRO_0000230441" description="Small ribosomal subunit protein uS11">
    <location>
        <begin position="1"/>
        <end position="129"/>
    </location>
</feature>
<protein>
    <recommendedName>
        <fullName evidence="1">Small ribosomal subunit protein uS11</fullName>
    </recommendedName>
    <alternativeName>
        <fullName evidence="2">30S ribosomal protein S11</fullName>
    </alternativeName>
</protein>
<organism>
    <name type="scientific">Aliivibrio fischeri (strain ATCC 700601 / ES114)</name>
    <name type="common">Vibrio fischeri</name>
    <dbReference type="NCBI Taxonomy" id="312309"/>
    <lineage>
        <taxon>Bacteria</taxon>
        <taxon>Pseudomonadati</taxon>
        <taxon>Pseudomonadota</taxon>
        <taxon>Gammaproteobacteria</taxon>
        <taxon>Vibrionales</taxon>
        <taxon>Vibrionaceae</taxon>
        <taxon>Aliivibrio</taxon>
    </lineage>
</organism>